<organism>
    <name type="scientific">Pasteurella multocida (strain Pm70)</name>
    <dbReference type="NCBI Taxonomy" id="272843"/>
    <lineage>
        <taxon>Bacteria</taxon>
        <taxon>Pseudomonadati</taxon>
        <taxon>Pseudomonadota</taxon>
        <taxon>Gammaproteobacteria</taxon>
        <taxon>Pasteurellales</taxon>
        <taxon>Pasteurellaceae</taxon>
        <taxon>Pasteurella</taxon>
    </lineage>
</organism>
<protein>
    <recommendedName>
        <fullName>Uncharacterized protein PM0614</fullName>
    </recommendedName>
</protein>
<name>Y614_PASMU</name>
<sequence length="92" mass="10340">MKTELEQEKELLMMKGDALRMKLYAQSKPKQVTPHFTFADSLSMIASSLNQPVVRSLAVSLLSKKLLSSKFLTYSALGMIALYLLNRNNSTE</sequence>
<reference key="1">
    <citation type="journal article" date="2001" name="Proc. Natl. Acad. Sci. U.S.A.">
        <title>Complete genomic sequence of Pasteurella multocida Pm70.</title>
        <authorList>
            <person name="May B.J."/>
            <person name="Zhang Q."/>
            <person name="Li L.L."/>
            <person name="Paustian M.L."/>
            <person name="Whittam T.S."/>
            <person name="Kapur V."/>
        </authorList>
    </citation>
    <scope>NUCLEOTIDE SEQUENCE [LARGE SCALE GENOMIC DNA]</scope>
    <source>
        <strain>Pm70</strain>
    </source>
</reference>
<feature type="chain" id="PRO_0000216300" description="Uncharacterized protein PM0614">
    <location>
        <begin position="1"/>
        <end position="92"/>
    </location>
</feature>
<keyword id="KW-1185">Reference proteome</keyword>
<accession>Q9CN31</accession>
<proteinExistence type="predicted"/>
<dbReference type="EMBL" id="AE004439">
    <property type="protein sequence ID" value="AAK02698.1"/>
    <property type="molecule type" value="Genomic_DNA"/>
</dbReference>
<dbReference type="RefSeq" id="WP_005726462.1">
    <property type="nucleotide sequence ID" value="NC_002663.1"/>
</dbReference>
<dbReference type="STRING" id="272843.PM0614"/>
<dbReference type="EnsemblBacteria" id="AAK02698">
    <property type="protein sequence ID" value="AAK02698"/>
    <property type="gene ID" value="PM0614"/>
</dbReference>
<dbReference type="KEGG" id="pmu:PM0614"/>
<dbReference type="HOGENOM" id="CLU_185207_0_0_6"/>
<dbReference type="OrthoDB" id="5690540at2"/>
<dbReference type="Proteomes" id="UP000000809">
    <property type="component" value="Chromosome"/>
</dbReference>
<gene>
    <name type="ordered locus">PM0614</name>
</gene>